<name>FGF1_XENLA</name>
<protein>
    <recommendedName>
        <fullName>Fibroblast growth factor 1</fullName>
        <shortName>FGF-1</shortName>
    </recommendedName>
    <alternativeName>
        <fullName>Acidic fibroblast growth factor</fullName>
        <shortName>aFGF</shortName>
    </alternativeName>
    <alternativeName>
        <fullName>Heparin-binding growth factor 1</fullName>
        <shortName>HBGF-1</shortName>
    </alternativeName>
</protein>
<proteinExistence type="evidence at transcript level"/>
<sequence length="155" mass="17318">MAEGDITTFNAITESFSLPIGNYKKPKLLYCNNGGYFLRILPEGVVDGTRDRNDLYITLKLSALSQGEVHIKTTETGCYLAMDSSGQLYGTLTPNEECLFLETLEENHYNTYKSKKYADMNWFVGIKKNGASKKGSRTHYGQKAILFLPLPASPD</sequence>
<comment type="function">
    <text evidence="2">Plays an important role in the regulation of cell survival, cell division, angiogenesis, cell differentiation and cell migration. Functions as a potent mitogen in vitro. Acts as a ligand for FGFR1 and integrins. Binds to FGFR1 in the presence of heparin leading to FGFR1 dimerization and activation via sequential autophosphorylation on tyrosine residues which act as docking sites for interacting proteins, leading to the activation of several signaling cascades. Binds to integrins. Its binding to integrins and subsequent ternary complex formation with integrins and FGFR1 are essential for FGF1 signaling.</text>
</comment>
<comment type="subcellular location">
    <subcellularLocation>
        <location evidence="1">Secreted</location>
    </subcellularLocation>
    <subcellularLocation>
        <location evidence="1">Cytoplasm</location>
    </subcellularLocation>
    <subcellularLocation>
        <location evidence="1">Cytoplasm</location>
        <location evidence="1">Cell cortex</location>
    </subcellularLocation>
    <subcellularLocation>
        <location evidence="1">Cytoplasm</location>
        <location evidence="1">Cytosol</location>
    </subcellularLocation>
    <subcellularLocation>
        <location evidence="1">Nucleus</location>
    </subcellularLocation>
    <text evidence="1">Lacks a cleavable signal sequence. Within the cytoplasm, it is transported to the cell membrane and then secreted by a non-classical pathway that requires Cu(2+) ions and S100A13 (By similarity). Binding of exogenous FGF1 to FGFR facilitates endocytosis followed by translocation of FGF1 across endosomal membrane into the cytosol. Nuclear import from the cytosol requires the classical nuclear import machinery (By similarity).</text>
</comment>
<comment type="similarity">
    <text evidence="3">Belongs to the heparin-binding growth factors family.</text>
</comment>
<gene>
    <name type="primary">fgf1</name>
    <name type="synonym">fgf-1</name>
</gene>
<accession>Q6GLR6</accession>
<dbReference type="EMBL" id="BC074391">
    <property type="protein sequence ID" value="AAH74391.1"/>
    <property type="molecule type" value="mRNA"/>
</dbReference>
<dbReference type="RefSeq" id="NP_001086257.1">
    <property type="nucleotide sequence ID" value="NM_001092788.1"/>
</dbReference>
<dbReference type="SMR" id="Q6GLR6"/>
<dbReference type="DNASU" id="444686"/>
<dbReference type="GeneID" id="444686"/>
<dbReference type="KEGG" id="xla:444686"/>
<dbReference type="AGR" id="Xenbase:XB-GENE-865566"/>
<dbReference type="CTD" id="444686"/>
<dbReference type="Xenbase" id="XB-GENE-865566">
    <property type="gene designation" value="fgf1.L"/>
</dbReference>
<dbReference type="OMA" id="NTYKSKM"/>
<dbReference type="OrthoDB" id="5987799at2759"/>
<dbReference type="Proteomes" id="UP000186698">
    <property type="component" value="Chromosome 3L"/>
</dbReference>
<dbReference type="Bgee" id="444686">
    <property type="expression patterns" value="Expressed in muscle tissue and 18 other cell types or tissues"/>
</dbReference>
<dbReference type="GO" id="GO:0005938">
    <property type="term" value="C:cell cortex"/>
    <property type="evidence" value="ECO:0007669"/>
    <property type="project" value="UniProtKB-SubCell"/>
</dbReference>
<dbReference type="GO" id="GO:0005737">
    <property type="term" value="C:cytoplasm"/>
    <property type="evidence" value="ECO:0000318"/>
    <property type="project" value="GO_Central"/>
</dbReference>
<dbReference type="GO" id="GO:0005829">
    <property type="term" value="C:cytosol"/>
    <property type="evidence" value="ECO:0000250"/>
    <property type="project" value="UniProtKB"/>
</dbReference>
<dbReference type="GO" id="GO:0005576">
    <property type="term" value="C:extracellular region"/>
    <property type="evidence" value="ECO:0000250"/>
    <property type="project" value="UniProtKB"/>
</dbReference>
<dbReference type="GO" id="GO:0005615">
    <property type="term" value="C:extracellular space"/>
    <property type="evidence" value="ECO:0000250"/>
    <property type="project" value="UniProtKB"/>
</dbReference>
<dbReference type="GO" id="GO:0005634">
    <property type="term" value="C:nucleus"/>
    <property type="evidence" value="ECO:0000318"/>
    <property type="project" value="GO_Central"/>
</dbReference>
<dbReference type="GO" id="GO:0005104">
    <property type="term" value="F:fibroblast growth factor receptor binding"/>
    <property type="evidence" value="ECO:0000250"/>
    <property type="project" value="UniProtKB"/>
</dbReference>
<dbReference type="GO" id="GO:0008083">
    <property type="term" value="F:growth factor activity"/>
    <property type="evidence" value="ECO:0000250"/>
    <property type="project" value="UniProtKB"/>
</dbReference>
<dbReference type="GO" id="GO:0008201">
    <property type="term" value="F:heparin binding"/>
    <property type="evidence" value="ECO:0000250"/>
    <property type="project" value="UniProtKB"/>
</dbReference>
<dbReference type="GO" id="GO:0005178">
    <property type="term" value="F:integrin binding"/>
    <property type="evidence" value="ECO:0000250"/>
    <property type="project" value="UniProtKB"/>
</dbReference>
<dbReference type="GO" id="GO:0044548">
    <property type="term" value="F:S100 protein binding"/>
    <property type="evidence" value="ECO:0000250"/>
    <property type="project" value="UniProtKB"/>
</dbReference>
<dbReference type="GO" id="GO:0001525">
    <property type="term" value="P:angiogenesis"/>
    <property type="evidence" value="ECO:0007669"/>
    <property type="project" value="UniProtKB-KW"/>
</dbReference>
<dbReference type="GO" id="GO:0060681">
    <property type="term" value="P:branch elongation involved in ureteric bud branching"/>
    <property type="evidence" value="ECO:0000250"/>
    <property type="project" value="UniProtKB"/>
</dbReference>
<dbReference type="GO" id="GO:0008543">
    <property type="term" value="P:fibroblast growth factor receptor signaling pathway"/>
    <property type="evidence" value="ECO:0000250"/>
    <property type="project" value="UniProtKB"/>
</dbReference>
<dbReference type="GO" id="GO:0072163">
    <property type="term" value="P:mesonephric epithelium development"/>
    <property type="evidence" value="ECO:0000250"/>
    <property type="project" value="UniProtKB"/>
</dbReference>
<dbReference type="GO" id="GO:0022008">
    <property type="term" value="P:neurogenesis"/>
    <property type="evidence" value="ECO:0000318"/>
    <property type="project" value="GO_Central"/>
</dbReference>
<dbReference type="GO" id="GO:0045766">
    <property type="term" value="P:positive regulation of angiogenesis"/>
    <property type="evidence" value="ECO:0000250"/>
    <property type="project" value="UniProtKB"/>
</dbReference>
<dbReference type="GO" id="GO:0051781">
    <property type="term" value="P:positive regulation of cell division"/>
    <property type="evidence" value="ECO:0000250"/>
    <property type="project" value="UniProtKB"/>
</dbReference>
<dbReference type="GO" id="GO:0030335">
    <property type="term" value="P:positive regulation of cell migration"/>
    <property type="evidence" value="ECO:0000250"/>
    <property type="project" value="UniProtKB"/>
</dbReference>
<dbReference type="GO" id="GO:0008284">
    <property type="term" value="P:positive regulation of cell population proliferation"/>
    <property type="evidence" value="ECO:0000250"/>
    <property type="project" value="UniProtKB"/>
</dbReference>
<dbReference type="GO" id="GO:0045542">
    <property type="term" value="P:positive regulation of cholesterol biosynthetic process"/>
    <property type="evidence" value="ECO:0000250"/>
    <property type="project" value="UniProtKB"/>
</dbReference>
<dbReference type="GO" id="GO:1902533">
    <property type="term" value="P:positive regulation of intracellular signal transduction"/>
    <property type="evidence" value="ECO:0000250"/>
    <property type="project" value="UniProtKB"/>
</dbReference>
<dbReference type="GO" id="GO:0043410">
    <property type="term" value="P:positive regulation of MAPK cascade"/>
    <property type="evidence" value="ECO:0000318"/>
    <property type="project" value="GO_Central"/>
</dbReference>
<dbReference type="GO" id="GO:0045944">
    <property type="term" value="P:positive regulation of transcription by RNA polymerase II"/>
    <property type="evidence" value="ECO:0000250"/>
    <property type="project" value="UniProtKB"/>
</dbReference>
<dbReference type="GO" id="GO:0030334">
    <property type="term" value="P:regulation of cell migration"/>
    <property type="evidence" value="ECO:0000318"/>
    <property type="project" value="GO_Central"/>
</dbReference>
<dbReference type="CDD" id="cd23313">
    <property type="entry name" value="beta-trefoil_FGF1"/>
    <property type="match status" value="1"/>
</dbReference>
<dbReference type="FunFam" id="2.80.10.50:FF:000020">
    <property type="entry name" value="Fibroblast growth factor 1"/>
    <property type="match status" value="1"/>
</dbReference>
<dbReference type="Gene3D" id="2.80.10.50">
    <property type="match status" value="1"/>
</dbReference>
<dbReference type="InterPro" id="IPR002209">
    <property type="entry name" value="Fibroblast_GF_fam"/>
</dbReference>
<dbReference type="InterPro" id="IPR008996">
    <property type="entry name" value="IL1/FGF"/>
</dbReference>
<dbReference type="PANTHER" id="PTHR11486">
    <property type="entry name" value="FIBROBLAST GROWTH FACTOR"/>
    <property type="match status" value="1"/>
</dbReference>
<dbReference type="Pfam" id="PF00167">
    <property type="entry name" value="FGF"/>
    <property type="match status" value="1"/>
</dbReference>
<dbReference type="PRINTS" id="PR00263">
    <property type="entry name" value="HBGFFGF"/>
</dbReference>
<dbReference type="PRINTS" id="PR00262">
    <property type="entry name" value="IL1HBGF"/>
</dbReference>
<dbReference type="SMART" id="SM00442">
    <property type="entry name" value="FGF"/>
    <property type="match status" value="1"/>
</dbReference>
<dbReference type="SUPFAM" id="SSF50353">
    <property type="entry name" value="Cytokine"/>
    <property type="match status" value="1"/>
</dbReference>
<dbReference type="PROSITE" id="PS00247">
    <property type="entry name" value="HBGF_FGF"/>
    <property type="match status" value="1"/>
</dbReference>
<reference key="1">
    <citation type="submission" date="2004-06" db="EMBL/GenBank/DDBJ databases">
        <authorList>
            <consortium name="NIH - Xenopus Gene Collection (XGC) project"/>
        </authorList>
    </citation>
    <scope>NUCLEOTIDE SEQUENCE [LARGE SCALE MRNA]</scope>
    <source>
        <tissue>Eye</tissue>
    </source>
</reference>
<organism>
    <name type="scientific">Xenopus laevis</name>
    <name type="common">African clawed frog</name>
    <dbReference type="NCBI Taxonomy" id="8355"/>
    <lineage>
        <taxon>Eukaryota</taxon>
        <taxon>Metazoa</taxon>
        <taxon>Chordata</taxon>
        <taxon>Craniata</taxon>
        <taxon>Vertebrata</taxon>
        <taxon>Euteleostomi</taxon>
        <taxon>Amphibia</taxon>
        <taxon>Batrachia</taxon>
        <taxon>Anura</taxon>
        <taxon>Pipoidea</taxon>
        <taxon>Pipidae</taxon>
        <taxon>Xenopodinae</taxon>
        <taxon>Xenopus</taxon>
        <taxon>Xenopus</taxon>
    </lineage>
</organism>
<evidence type="ECO:0000250" key="1"/>
<evidence type="ECO:0000250" key="2">
    <source>
        <dbReference type="UniProtKB" id="P05230"/>
    </source>
</evidence>
<evidence type="ECO:0000305" key="3"/>
<feature type="propeptide" id="PRO_0000008925" evidence="1">
    <location>
        <begin position="1"/>
        <end position="15"/>
    </location>
</feature>
<feature type="chain" id="PRO_0000008926" description="Fibroblast growth factor 1">
    <location>
        <begin position="16"/>
        <end position="155"/>
    </location>
</feature>
<feature type="region of interest" description="Heparin-binding" evidence="1">
    <location>
        <begin position="127"/>
        <end position="143"/>
    </location>
</feature>
<feature type="binding site" evidence="1">
    <location>
        <position position="33"/>
    </location>
    <ligand>
        <name>heparin</name>
        <dbReference type="ChEBI" id="CHEBI:28304"/>
    </ligand>
</feature>
<keyword id="KW-0037">Angiogenesis</keyword>
<keyword id="KW-0963">Cytoplasm</keyword>
<keyword id="KW-0217">Developmental protein</keyword>
<keyword id="KW-0221">Differentiation</keyword>
<keyword id="KW-0339">Growth factor</keyword>
<keyword id="KW-0358">Heparin-binding</keyword>
<keyword id="KW-0497">Mitogen</keyword>
<keyword id="KW-0539">Nucleus</keyword>
<keyword id="KW-1185">Reference proteome</keyword>
<keyword id="KW-0964">Secreted</keyword>